<sequence>MQDLSLEARLAELESRLAFQEITIEELNVTVTAHEMEMAKLRDHLRLLTEKLKASQPSNIASQAEETPPPHY</sequence>
<dbReference type="EMBL" id="CP000948">
    <property type="protein sequence ID" value="ACB04407.1"/>
    <property type="molecule type" value="Genomic_DNA"/>
</dbReference>
<dbReference type="RefSeq" id="WP_001153615.1">
    <property type="nucleotide sequence ID" value="NC_010473.1"/>
</dbReference>
<dbReference type="SMR" id="B1X6J7"/>
<dbReference type="KEGG" id="ecd:ECDH10B_3523"/>
<dbReference type="HOGENOM" id="CLU_180796_4_2_6"/>
<dbReference type="Gene3D" id="1.20.5.300">
    <property type="match status" value="1"/>
</dbReference>
<dbReference type="HAMAP" id="MF_00715">
    <property type="entry name" value="SlyX"/>
    <property type="match status" value="1"/>
</dbReference>
<dbReference type="InterPro" id="IPR007236">
    <property type="entry name" value="SlyX"/>
</dbReference>
<dbReference type="NCBIfam" id="NF002750">
    <property type="entry name" value="PRK02793.1"/>
    <property type="match status" value="1"/>
</dbReference>
<dbReference type="PANTHER" id="PTHR36508">
    <property type="entry name" value="PROTEIN SLYX"/>
    <property type="match status" value="1"/>
</dbReference>
<dbReference type="PANTHER" id="PTHR36508:SF1">
    <property type="entry name" value="PROTEIN SLYX"/>
    <property type="match status" value="1"/>
</dbReference>
<dbReference type="Pfam" id="PF04102">
    <property type="entry name" value="SlyX"/>
    <property type="match status" value="1"/>
</dbReference>
<accession>B1X6J7</accession>
<gene>
    <name evidence="1" type="primary">slyX</name>
    <name type="ordered locus">ECDH10B_3523</name>
</gene>
<name>SLYX_ECODH</name>
<reference key="1">
    <citation type="journal article" date="2008" name="J. Bacteriol.">
        <title>The complete genome sequence of Escherichia coli DH10B: insights into the biology of a laboratory workhorse.</title>
        <authorList>
            <person name="Durfee T."/>
            <person name="Nelson R."/>
            <person name="Baldwin S."/>
            <person name="Plunkett G. III"/>
            <person name="Burland V."/>
            <person name="Mau B."/>
            <person name="Petrosino J.F."/>
            <person name="Qin X."/>
            <person name="Muzny D.M."/>
            <person name="Ayele M."/>
            <person name="Gibbs R.A."/>
            <person name="Csorgo B."/>
            <person name="Posfai G."/>
            <person name="Weinstock G.M."/>
            <person name="Blattner F.R."/>
        </authorList>
    </citation>
    <scope>NUCLEOTIDE SEQUENCE [LARGE SCALE GENOMIC DNA]</scope>
    <source>
        <strain>K12 / DH10B</strain>
    </source>
</reference>
<protein>
    <recommendedName>
        <fullName evidence="1">Protein SlyX</fullName>
    </recommendedName>
</protein>
<comment type="similarity">
    <text evidence="1">Belongs to the SlyX family.</text>
</comment>
<organism>
    <name type="scientific">Escherichia coli (strain K12 / DH10B)</name>
    <dbReference type="NCBI Taxonomy" id="316385"/>
    <lineage>
        <taxon>Bacteria</taxon>
        <taxon>Pseudomonadati</taxon>
        <taxon>Pseudomonadota</taxon>
        <taxon>Gammaproteobacteria</taxon>
        <taxon>Enterobacterales</taxon>
        <taxon>Enterobacteriaceae</taxon>
        <taxon>Escherichia</taxon>
    </lineage>
</organism>
<evidence type="ECO:0000255" key="1">
    <source>
        <dbReference type="HAMAP-Rule" id="MF_00715"/>
    </source>
</evidence>
<evidence type="ECO:0000256" key="2">
    <source>
        <dbReference type="SAM" id="MobiDB-lite"/>
    </source>
</evidence>
<proteinExistence type="inferred from homology"/>
<feature type="chain" id="PRO_1000195832" description="Protein SlyX">
    <location>
        <begin position="1"/>
        <end position="72"/>
    </location>
</feature>
<feature type="region of interest" description="Disordered" evidence="2">
    <location>
        <begin position="52"/>
        <end position="72"/>
    </location>
</feature>
<feature type="compositionally biased region" description="Polar residues" evidence="2">
    <location>
        <begin position="55"/>
        <end position="65"/>
    </location>
</feature>